<comment type="function">
    <text evidence="1">Involved in the biosynthesis of isopentenyl diphosphate (IPP) and dimethylallyl diphosphate (DMAPP), two major building blocks of isoprenoid compounds. Catalyzes the conversion of 4-diphosphocytidyl-2-C-methyl-D-erythritol 2-phosphate (CDP-ME2P) to 2-C-methyl-D-erythritol 2,4-cyclodiphosphate (ME-CPP) with a corresponding release of cytidine 5-monophosphate (CMP).</text>
</comment>
<comment type="catalytic activity">
    <reaction evidence="1">
        <text>4-CDP-2-C-methyl-D-erythritol 2-phosphate = 2-C-methyl-D-erythritol 2,4-cyclic diphosphate + CMP</text>
        <dbReference type="Rhea" id="RHEA:23864"/>
        <dbReference type="ChEBI" id="CHEBI:57919"/>
        <dbReference type="ChEBI" id="CHEBI:58483"/>
        <dbReference type="ChEBI" id="CHEBI:60377"/>
        <dbReference type="EC" id="4.6.1.12"/>
    </reaction>
</comment>
<comment type="cofactor">
    <cofactor evidence="1">
        <name>a divalent metal cation</name>
        <dbReference type="ChEBI" id="CHEBI:60240"/>
    </cofactor>
    <text evidence="1">Binds 1 divalent metal cation per subunit.</text>
</comment>
<comment type="pathway">
    <text evidence="1">Isoprenoid biosynthesis; isopentenyl diphosphate biosynthesis via DXP pathway; isopentenyl diphosphate from 1-deoxy-D-xylulose 5-phosphate: step 4/6.</text>
</comment>
<comment type="subunit">
    <text evidence="1">Homotrimer.</text>
</comment>
<comment type="similarity">
    <text evidence="1">Belongs to the IspF family.</text>
</comment>
<accession>Q8G5L2</accession>
<proteinExistence type="inferred from homology"/>
<feature type="chain" id="PRO_0000189443" description="2-C-methyl-D-erythritol 2,4-cyclodiphosphate synthase">
    <location>
        <begin position="1"/>
        <end position="174"/>
    </location>
</feature>
<feature type="binding site" evidence="1">
    <location>
        <begin position="13"/>
        <end position="15"/>
    </location>
    <ligand>
        <name>4-CDP-2-C-methyl-D-erythritol 2-phosphate</name>
        <dbReference type="ChEBI" id="CHEBI:57919"/>
    </ligand>
</feature>
<feature type="binding site" evidence="1">
    <location>
        <position position="13"/>
    </location>
    <ligand>
        <name>a divalent metal cation</name>
        <dbReference type="ChEBI" id="CHEBI:60240"/>
    </ligand>
</feature>
<feature type="binding site" evidence="1">
    <location>
        <position position="15"/>
    </location>
    <ligand>
        <name>a divalent metal cation</name>
        <dbReference type="ChEBI" id="CHEBI:60240"/>
    </ligand>
</feature>
<feature type="binding site" evidence="1">
    <location>
        <position position="61"/>
    </location>
    <ligand>
        <name>a divalent metal cation</name>
        <dbReference type="ChEBI" id="CHEBI:60240"/>
    </ligand>
</feature>
<feature type="binding site" evidence="1">
    <location>
        <begin position="75"/>
        <end position="77"/>
    </location>
    <ligand>
        <name>4-CDP-2-C-methyl-D-erythritol 2-phosphate</name>
        <dbReference type="ChEBI" id="CHEBI:57919"/>
    </ligand>
</feature>
<feature type="binding site" evidence="1">
    <location>
        <begin position="149"/>
        <end position="152"/>
    </location>
    <ligand>
        <name>4-CDP-2-C-methyl-D-erythritol 2-phosphate</name>
        <dbReference type="ChEBI" id="CHEBI:57919"/>
    </ligand>
</feature>
<feature type="binding site" evidence="1">
    <location>
        <position position="156"/>
    </location>
    <ligand>
        <name>4-CDP-2-C-methyl-D-erythritol 2-phosphate</name>
        <dbReference type="ChEBI" id="CHEBI:57919"/>
    </ligand>
</feature>
<feature type="binding site" evidence="1">
    <location>
        <position position="159"/>
    </location>
    <ligand>
        <name>4-CDP-2-C-methyl-D-erythritol 2-phosphate</name>
        <dbReference type="ChEBI" id="CHEBI:57919"/>
    </ligand>
</feature>
<feature type="site" description="Transition state stabilizer" evidence="1">
    <location>
        <position position="53"/>
    </location>
</feature>
<feature type="site" description="Transition state stabilizer" evidence="1">
    <location>
        <position position="150"/>
    </location>
</feature>
<evidence type="ECO:0000255" key="1">
    <source>
        <dbReference type="HAMAP-Rule" id="MF_00107"/>
    </source>
</evidence>
<keyword id="KW-0414">Isoprene biosynthesis</keyword>
<keyword id="KW-0456">Lyase</keyword>
<keyword id="KW-0479">Metal-binding</keyword>
<keyword id="KW-1185">Reference proteome</keyword>
<reference key="1">
    <citation type="journal article" date="2002" name="Proc. Natl. Acad. Sci. U.S.A.">
        <title>The genome sequence of Bifidobacterium longum reflects its adaptation to the human gastrointestinal tract.</title>
        <authorList>
            <person name="Schell M.A."/>
            <person name="Karmirantzou M."/>
            <person name="Snel B."/>
            <person name="Vilanova D."/>
            <person name="Berger B."/>
            <person name="Pessi G."/>
            <person name="Zwahlen M.-C."/>
            <person name="Desiere F."/>
            <person name="Bork P."/>
            <person name="Delley M."/>
            <person name="Pridmore R.D."/>
            <person name="Arigoni F."/>
        </authorList>
    </citation>
    <scope>NUCLEOTIDE SEQUENCE [LARGE SCALE GENOMIC DNA]</scope>
    <source>
        <strain>NCC 2705</strain>
    </source>
</reference>
<protein>
    <recommendedName>
        <fullName evidence="1">2-C-methyl-D-erythritol 2,4-cyclodiphosphate synthase</fullName>
        <shortName evidence="1">MECDP-synthase</shortName>
        <shortName evidence="1">MECPP-synthase</shortName>
        <shortName evidence="1">MECPS</shortName>
        <ecNumber evidence="1">4.6.1.12</ecNumber>
    </recommendedName>
</protein>
<organism>
    <name type="scientific">Bifidobacterium longum (strain NCC 2705)</name>
    <dbReference type="NCBI Taxonomy" id="206672"/>
    <lineage>
        <taxon>Bacteria</taxon>
        <taxon>Bacillati</taxon>
        <taxon>Actinomycetota</taxon>
        <taxon>Actinomycetes</taxon>
        <taxon>Bifidobacteriales</taxon>
        <taxon>Bifidobacteriaceae</taxon>
        <taxon>Bifidobacterium</taxon>
    </lineage>
</organism>
<gene>
    <name evidence="1" type="primary">ispF</name>
    <name type="ordered locus">BL0997</name>
</gene>
<name>ISPF_BIFLO</name>
<dbReference type="EC" id="4.6.1.12" evidence="1"/>
<dbReference type="EMBL" id="AE014295">
    <property type="protein sequence ID" value="AAN24805.1"/>
    <property type="molecule type" value="Genomic_DNA"/>
</dbReference>
<dbReference type="RefSeq" id="NP_696169.1">
    <property type="nucleotide sequence ID" value="NC_004307.2"/>
</dbReference>
<dbReference type="RefSeq" id="WP_011068243.1">
    <property type="nucleotide sequence ID" value="NC_004307.2"/>
</dbReference>
<dbReference type="SMR" id="Q8G5L2"/>
<dbReference type="STRING" id="206672.BL0997"/>
<dbReference type="EnsemblBacteria" id="AAN24805">
    <property type="protein sequence ID" value="AAN24805"/>
    <property type="gene ID" value="BL0997"/>
</dbReference>
<dbReference type="KEGG" id="blo:BL0997"/>
<dbReference type="PATRIC" id="fig|206672.9.peg.699"/>
<dbReference type="HOGENOM" id="CLU_084630_1_0_11"/>
<dbReference type="OrthoDB" id="9804336at2"/>
<dbReference type="PhylomeDB" id="Q8G5L2"/>
<dbReference type="UniPathway" id="UPA00056">
    <property type="reaction ID" value="UER00095"/>
</dbReference>
<dbReference type="Proteomes" id="UP000000439">
    <property type="component" value="Chromosome"/>
</dbReference>
<dbReference type="GO" id="GO:0008685">
    <property type="term" value="F:2-C-methyl-D-erythritol 2,4-cyclodiphosphate synthase activity"/>
    <property type="evidence" value="ECO:0007669"/>
    <property type="project" value="UniProtKB-UniRule"/>
</dbReference>
<dbReference type="GO" id="GO:0046872">
    <property type="term" value="F:metal ion binding"/>
    <property type="evidence" value="ECO:0007669"/>
    <property type="project" value="UniProtKB-KW"/>
</dbReference>
<dbReference type="GO" id="GO:0019288">
    <property type="term" value="P:isopentenyl diphosphate biosynthetic process, methylerythritol 4-phosphate pathway"/>
    <property type="evidence" value="ECO:0007669"/>
    <property type="project" value="UniProtKB-UniRule"/>
</dbReference>
<dbReference type="GO" id="GO:0016114">
    <property type="term" value="P:terpenoid biosynthetic process"/>
    <property type="evidence" value="ECO:0007669"/>
    <property type="project" value="InterPro"/>
</dbReference>
<dbReference type="CDD" id="cd00554">
    <property type="entry name" value="MECDP_synthase"/>
    <property type="match status" value="1"/>
</dbReference>
<dbReference type="Gene3D" id="3.30.1330.50">
    <property type="entry name" value="2-C-methyl-D-erythritol 2,4-cyclodiphosphate synthase"/>
    <property type="match status" value="1"/>
</dbReference>
<dbReference type="HAMAP" id="MF_00107">
    <property type="entry name" value="IspF"/>
    <property type="match status" value="1"/>
</dbReference>
<dbReference type="InterPro" id="IPR003526">
    <property type="entry name" value="MECDP_synthase"/>
</dbReference>
<dbReference type="InterPro" id="IPR020555">
    <property type="entry name" value="MECDP_synthase_CS"/>
</dbReference>
<dbReference type="InterPro" id="IPR036571">
    <property type="entry name" value="MECDP_synthase_sf"/>
</dbReference>
<dbReference type="NCBIfam" id="TIGR00151">
    <property type="entry name" value="ispF"/>
    <property type="match status" value="1"/>
</dbReference>
<dbReference type="PANTHER" id="PTHR43181">
    <property type="entry name" value="2-C-METHYL-D-ERYTHRITOL 2,4-CYCLODIPHOSPHATE SYNTHASE, CHLOROPLASTIC"/>
    <property type="match status" value="1"/>
</dbReference>
<dbReference type="PANTHER" id="PTHR43181:SF1">
    <property type="entry name" value="2-C-METHYL-D-ERYTHRITOL 2,4-CYCLODIPHOSPHATE SYNTHASE, CHLOROPLASTIC"/>
    <property type="match status" value="1"/>
</dbReference>
<dbReference type="Pfam" id="PF02542">
    <property type="entry name" value="YgbB"/>
    <property type="match status" value="1"/>
</dbReference>
<dbReference type="SUPFAM" id="SSF69765">
    <property type="entry name" value="IpsF-like"/>
    <property type="match status" value="1"/>
</dbReference>
<dbReference type="PROSITE" id="PS01350">
    <property type="entry name" value="ISPF"/>
    <property type="match status" value="1"/>
</dbReference>
<sequence>MGSVGVLIGQGFDAHRFAPAGSGRELWIAGLYWPVPDSCSEADAAKYEGIEGDSDGDVAAHALIDALLAAARLGDIGSLFGVGADAHGAGMHGIDMLQEVVAHLASNGYTPASASVAIIGNRPKIGTRRAEAEAALSAAVGCPVSVTATTTDHMGFTGHGEGIAAIANALVEKI</sequence>